<accession>A8Z4N7</accession>
<feature type="signal peptide" evidence="1">
    <location>
        <begin position="1"/>
        <end position="36"/>
    </location>
</feature>
<feature type="chain" id="PRO_0000359562" description="Serine protease SplC">
    <location>
        <begin position="37"/>
        <end position="239"/>
    </location>
</feature>
<feature type="active site" description="Charge relay system" evidence="1">
    <location>
        <position position="75"/>
    </location>
</feature>
<feature type="active site" description="Charge relay system" evidence="1">
    <location>
        <position position="113"/>
    </location>
</feature>
<feature type="active site" description="Charge relay system" evidence="1">
    <location>
        <position position="193"/>
    </location>
</feature>
<reference key="1">
    <citation type="journal article" date="2007" name="BMC Microbiol.">
        <title>Subtle genetic changes enhance virulence of methicillin resistant and sensitive Staphylococcus aureus.</title>
        <authorList>
            <person name="Highlander S.K."/>
            <person name="Hulten K.G."/>
            <person name="Qin X."/>
            <person name="Jiang H."/>
            <person name="Yerrapragada S."/>
            <person name="Mason E.O. Jr."/>
            <person name="Shang Y."/>
            <person name="Williams T.M."/>
            <person name="Fortunov R.M."/>
            <person name="Liu Y."/>
            <person name="Igboeli O."/>
            <person name="Petrosino J."/>
            <person name="Tirumalai M."/>
            <person name="Uzman A."/>
            <person name="Fox G.E."/>
            <person name="Cardenas A.M."/>
            <person name="Muzny D.M."/>
            <person name="Hemphill L."/>
            <person name="Ding Y."/>
            <person name="Dugan S."/>
            <person name="Blyth P.R."/>
            <person name="Buhay C.J."/>
            <person name="Dinh H.H."/>
            <person name="Hawes A.C."/>
            <person name="Holder M."/>
            <person name="Kovar C.L."/>
            <person name="Lee S.L."/>
            <person name="Liu W."/>
            <person name="Nazareth L.V."/>
            <person name="Wang Q."/>
            <person name="Zhou J."/>
            <person name="Kaplan S.L."/>
            <person name="Weinstock G.M."/>
        </authorList>
    </citation>
    <scope>NUCLEOTIDE SEQUENCE [LARGE SCALE GENOMIC DNA]</scope>
    <source>
        <strain>USA300 / TCH1516</strain>
    </source>
</reference>
<name>SPLC_STAAT</name>
<evidence type="ECO:0000250" key="1"/>
<evidence type="ECO:0000305" key="2"/>
<keyword id="KW-0378">Hydrolase</keyword>
<keyword id="KW-0645">Protease</keyword>
<keyword id="KW-0964">Secreted</keyword>
<keyword id="KW-0720">Serine protease</keyword>
<keyword id="KW-0732">Signal</keyword>
<organism>
    <name type="scientific">Staphylococcus aureus (strain USA300 / TCH1516)</name>
    <dbReference type="NCBI Taxonomy" id="451516"/>
    <lineage>
        <taxon>Bacteria</taxon>
        <taxon>Bacillati</taxon>
        <taxon>Bacillota</taxon>
        <taxon>Bacilli</taxon>
        <taxon>Bacillales</taxon>
        <taxon>Staphylococcaceae</taxon>
        <taxon>Staphylococcus</taxon>
    </lineage>
</organism>
<comment type="subcellular location">
    <subcellularLocation>
        <location evidence="1">Secreted</location>
    </subcellularLocation>
</comment>
<comment type="similarity">
    <text evidence="2">Belongs to the peptidase S1B family.</text>
</comment>
<sequence>MNKNIVIKSMAALAILTSVTGINAAVVEETQQIANAEKNVTQVKDTNIFPYNGVVSFKDATGFVIGKNTIITNKHVSKDYKVGDRITAHPNGDKGNGGIYKIKSISDYPGDEDISVMNIEEQAVERGPKGFNFNENVQAFNFAKDAKVDDKIKVIGYPLPAQNSFKQFESTGTIKRIKDNILNFDAYIEPGNSGSPVLNSNNEVIGVVYGGIGKIGSEYNGAVYFTPQIKDFIQKHIEQ</sequence>
<gene>
    <name type="primary">splC</name>
    <name type="ordered locus">USA300HOU_1804</name>
</gene>
<proteinExistence type="inferred from homology"/>
<protein>
    <recommendedName>
        <fullName>Serine protease SplC</fullName>
        <ecNumber>3.4.21.-</ecNumber>
    </recommendedName>
</protein>
<dbReference type="EC" id="3.4.21.-"/>
<dbReference type="EMBL" id="CP000730">
    <property type="protein sequence ID" value="ABX29807.1"/>
    <property type="molecule type" value="Genomic_DNA"/>
</dbReference>
<dbReference type="RefSeq" id="WP_001038867.1">
    <property type="nucleotide sequence ID" value="NC_010079.1"/>
</dbReference>
<dbReference type="SMR" id="A8Z4N7"/>
<dbReference type="MEROPS" id="S01.283"/>
<dbReference type="KEGG" id="sax:USA300HOU_1804"/>
<dbReference type="HOGENOM" id="CLU_073589_2_0_9"/>
<dbReference type="GO" id="GO:0005576">
    <property type="term" value="C:extracellular region"/>
    <property type="evidence" value="ECO:0007669"/>
    <property type="project" value="UniProtKB-SubCell"/>
</dbReference>
<dbReference type="GO" id="GO:0004252">
    <property type="term" value="F:serine-type endopeptidase activity"/>
    <property type="evidence" value="ECO:0007669"/>
    <property type="project" value="InterPro"/>
</dbReference>
<dbReference type="GO" id="GO:0006508">
    <property type="term" value="P:proteolysis"/>
    <property type="evidence" value="ECO:0007669"/>
    <property type="project" value="UniProtKB-KW"/>
</dbReference>
<dbReference type="Gene3D" id="2.40.10.10">
    <property type="entry name" value="Trypsin-like serine proteases"/>
    <property type="match status" value="2"/>
</dbReference>
<dbReference type="InterPro" id="IPR009003">
    <property type="entry name" value="Peptidase_S1_PA"/>
</dbReference>
<dbReference type="InterPro" id="IPR043504">
    <property type="entry name" value="Peptidase_S1_PA_chymotrypsin"/>
</dbReference>
<dbReference type="InterPro" id="IPR008256">
    <property type="entry name" value="Peptidase_S1B"/>
</dbReference>
<dbReference type="InterPro" id="IPR008353">
    <property type="entry name" value="Peptidase_S1B_tx"/>
</dbReference>
<dbReference type="InterPro" id="IPR001254">
    <property type="entry name" value="Trypsin_dom"/>
</dbReference>
<dbReference type="InterPro" id="IPR028301">
    <property type="entry name" value="V8_his_AS"/>
</dbReference>
<dbReference type="PANTHER" id="PTHR43019:SF23">
    <property type="entry name" value="PROTEASE DO-LIKE 5, CHLOROPLASTIC"/>
    <property type="match status" value="1"/>
</dbReference>
<dbReference type="PANTHER" id="PTHR43019">
    <property type="entry name" value="SERINE ENDOPROTEASE DEGS"/>
    <property type="match status" value="1"/>
</dbReference>
<dbReference type="Pfam" id="PF00089">
    <property type="entry name" value="Trypsin"/>
    <property type="match status" value="1"/>
</dbReference>
<dbReference type="PRINTS" id="PR01774">
    <property type="entry name" value="EXFOLTOXIN"/>
</dbReference>
<dbReference type="PRINTS" id="PR00839">
    <property type="entry name" value="V8PROTEASE"/>
</dbReference>
<dbReference type="SUPFAM" id="SSF50494">
    <property type="entry name" value="Trypsin-like serine proteases"/>
    <property type="match status" value="1"/>
</dbReference>
<dbReference type="PROSITE" id="PS00672">
    <property type="entry name" value="V8_HIS"/>
    <property type="match status" value="1"/>
</dbReference>